<accession>B6I261</accession>
<evidence type="ECO:0000255" key="1">
    <source>
        <dbReference type="HAMAP-Rule" id="MF_00708"/>
    </source>
</evidence>
<reference key="1">
    <citation type="journal article" date="2008" name="DNA Res.">
        <title>Complete genome sequence and comparative analysis of the wild-type commensal Escherichia coli strain SE11 isolated from a healthy adult.</title>
        <authorList>
            <person name="Oshima K."/>
            <person name="Toh H."/>
            <person name="Ogura Y."/>
            <person name="Sasamoto H."/>
            <person name="Morita H."/>
            <person name="Park S.-H."/>
            <person name="Ooka T."/>
            <person name="Iyoda S."/>
            <person name="Taylor T.D."/>
            <person name="Hayashi T."/>
            <person name="Itoh K."/>
            <person name="Hattori M."/>
        </authorList>
    </citation>
    <scope>NUCLEOTIDE SEQUENCE [LARGE SCALE GENOMIC DNA]</scope>
    <source>
        <strain>SE11</strain>
    </source>
</reference>
<name>FRDC_ECOSE</name>
<dbReference type="EMBL" id="AP009240">
    <property type="protein sequence ID" value="BAG79978.1"/>
    <property type="molecule type" value="Genomic_DNA"/>
</dbReference>
<dbReference type="RefSeq" id="WP_000208757.1">
    <property type="nucleotide sequence ID" value="NC_011415.1"/>
</dbReference>
<dbReference type="SMR" id="B6I261"/>
<dbReference type="GeneID" id="93777670"/>
<dbReference type="KEGG" id="ecy:ECSE_4454"/>
<dbReference type="HOGENOM" id="CLU_156492_0_0_6"/>
<dbReference type="Proteomes" id="UP000008199">
    <property type="component" value="Chromosome"/>
</dbReference>
<dbReference type="GO" id="GO:0045283">
    <property type="term" value="C:fumarate reductase complex"/>
    <property type="evidence" value="ECO:0007669"/>
    <property type="project" value="UniProtKB-UniRule"/>
</dbReference>
<dbReference type="GO" id="GO:0005886">
    <property type="term" value="C:plasma membrane"/>
    <property type="evidence" value="ECO:0007669"/>
    <property type="project" value="UniProtKB-SubCell"/>
</dbReference>
<dbReference type="GO" id="GO:0000104">
    <property type="term" value="F:succinate dehydrogenase activity"/>
    <property type="evidence" value="ECO:0007669"/>
    <property type="project" value="UniProtKB-UniRule"/>
</dbReference>
<dbReference type="CDD" id="cd00546">
    <property type="entry name" value="QFR_TypeD_subunitC"/>
    <property type="match status" value="1"/>
</dbReference>
<dbReference type="FunFam" id="1.20.1300.10:FF:000003">
    <property type="entry name" value="Fumarate reductase subunit C"/>
    <property type="match status" value="1"/>
</dbReference>
<dbReference type="Gene3D" id="1.20.1300.10">
    <property type="entry name" value="Fumarate reductase/succinate dehydrogenase, transmembrane subunit"/>
    <property type="match status" value="1"/>
</dbReference>
<dbReference type="HAMAP" id="MF_00708">
    <property type="entry name" value="Fumarate_red_C"/>
    <property type="match status" value="1"/>
</dbReference>
<dbReference type="InterPro" id="IPR003510">
    <property type="entry name" value="Fumarate_red_C"/>
</dbReference>
<dbReference type="InterPro" id="IPR034804">
    <property type="entry name" value="SQR/QFR_C/D"/>
</dbReference>
<dbReference type="NCBIfam" id="NF003445">
    <property type="entry name" value="PRK04987.1"/>
    <property type="match status" value="1"/>
</dbReference>
<dbReference type="Pfam" id="PF02300">
    <property type="entry name" value="Fumarate_red_C"/>
    <property type="match status" value="1"/>
</dbReference>
<dbReference type="PIRSF" id="PIRSF000180">
    <property type="entry name" value="FrdC"/>
    <property type="match status" value="1"/>
</dbReference>
<dbReference type="SUPFAM" id="SSF81343">
    <property type="entry name" value="Fumarate reductase respiratory complex transmembrane subunits"/>
    <property type="match status" value="1"/>
</dbReference>
<organism>
    <name type="scientific">Escherichia coli (strain SE11)</name>
    <dbReference type="NCBI Taxonomy" id="409438"/>
    <lineage>
        <taxon>Bacteria</taxon>
        <taxon>Pseudomonadati</taxon>
        <taxon>Pseudomonadota</taxon>
        <taxon>Gammaproteobacteria</taxon>
        <taxon>Enterobacterales</taxon>
        <taxon>Enterobacteriaceae</taxon>
        <taxon>Escherichia</taxon>
    </lineage>
</organism>
<gene>
    <name evidence="1" type="primary">frdC</name>
    <name type="ordered locus">ECSE_4454</name>
</gene>
<feature type="chain" id="PRO_1000132375" description="Fumarate reductase subunit C">
    <location>
        <begin position="1"/>
        <end position="131"/>
    </location>
</feature>
<feature type="transmembrane region" description="Helical" evidence="1">
    <location>
        <begin position="30"/>
        <end position="50"/>
    </location>
</feature>
<feature type="transmembrane region" description="Helical" evidence="1">
    <location>
        <begin position="63"/>
        <end position="83"/>
    </location>
</feature>
<feature type="transmembrane region" description="Helical" evidence="1">
    <location>
        <begin position="109"/>
        <end position="129"/>
    </location>
</feature>
<proteinExistence type="inferred from homology"/>
<keyword id="KW-0997">Cell inner membrane</keyword>
<keyword id="KW-1003">Cell membrane</keyword>
<keyword id="KW-0472">Membrane</keyword>
<keyword id="KW-0812">Transmembrane</keyword>
<keyword id="KW-1133">Transmembrane helix</keyword>
<comment type="function">
    <text evidence="1">Two distinct, membrane-bound, FAD-containing enzymes are responsible for the catalysis of fumarate and succinate interconversion; fumarate reductase is used in anaerobic growth, and succinate dehydrogenase is used in aerobic growth. Anchors the catalytic components of the fumarate reductase complex to the cell inner membrane, binds quinones.</text>
</comment>
<comment type="subunit">
    <text evidence="1">Part of an enzyme complex containing four subunits: a flavoprotein (FrdA), an iron-sulfur protein (FrdB), and two hydrophobic anchor proteins (FrdC and FrdD).</text>
</comment>
<comment type="subcellular location">
    <subcellularLocation>
        <location evidence="1">Cell inner membrane</location>
        <topology evidence="1">Multi-pass membrane protein</topology>
    </subcellularLocation>
</comment>
<comment type="similarity">
    <text evidence="1">Belongs to the FrdC family.</text>
</comment>
<protein>
    <recommendedName>
        <fullName evidence="1">Fumarate reductase subunit C</fullName>
    </recommendedName>
    <alternativeName>
        <fullName evidence="1">Fumarate reductase 15 kDa hydrophobic protein</fullName>
    </alternativeName>
    <alternativeName>
        <fullName evidence="1">Quinol-fumarate reductase subunit C</fullName>
        <shortName evidence="1">QFR subunit C</shortName>
    </alternativeName>
</protein>
<sequence>MTTKRKPYVRPMTSTWWKKLPFYRFYMLREGTAVPAVWFSIELIFGLFALKNGPEAWAGFVDFLQNPVIVIINLITLAAALLHTKTWFELAPKAANIIVKDEKMGPEPIIKSLWAVTVVATIVILFVALYW</sequence>